<organism>
    <name type="scientific">Rattus norvegicus</name>
    <name type="common">Rat</name>
    <dbReference type="NCBI Taxonomy" id="10116"/>
    <lineage>
        <taxon>Eukaryota</taxon>
        <taxon>Metazoa</taxon>
        <taxon>Chordata</taxon>
        <taxon>Craniata</taxon>
        <taxon>Vertebrata</taxon>
        <taxon>Euteleostomi</taxon>
        <taxon>Mammalia</taxon>
        <taxon>Eutheria</taxon>
        <taxon>Euarchontoglires</taxon>
        <taxon>Glires</taxon>
        <taxon>Rodentia</taxon>
        <taxon>Myomorpha</taxon>
        <taxon>Muroidea</taxon>
        <taxon>Muridae</taxon>
        <taxon>Murinae</taxon>
        <taxon>Rattus</taxon>
    </lineage>
</organism>
<comment type="similarity">
    <text evidence="2">Belongs to the OCC1 family.</text>
</comment>
<name>OCC1_RAT</name>
<dbReference type="EMBL" id="BE112417">
    <property type="status" value="NOT_ANNOTATED_CDS"/>
    <property type="molecule type" value="mRNA"/>
</dbReference>
<dbReference type="EMBL" id="AI575172">
    <property type="status" value="NOT_ANNOTATED_CDS"/>
    <property type="molecule type" value="mRNA"/>
</dbReference>
<dbReference type="FunCoup" id="P0CD96">
    <property type="interactions" value="93"/>
</dbReference>
<dbReference type="STRING" id="10116.ENSRNOP00000075676"/>
<dbReference type="PaxDb" id="10116-ENSRNOP00000067517"/>
<dbReference type="AGR" id="RGD:6495714"/>
<dbReference type="RGD" id="6495714">
    <property type="gene designation" value="C7h12orf75"/>
</dbReference>
<dbReference type="eggNOG" id="ENOG502SSZ4">
    <property type="taxonomic scope" value="Eukaryota"/>
</dbReference>
<dbReference type="InParanoid" id="P0CD96"/>
<dbReference type="Proteomes" id="UP000002494">
    <property type="component" value="Unplaced"/>
</dbReference>
<dbReference type="InterPro" id="IPR029133">
    <property type="entry name" value="OCC1"/>
</dbReference>
<dbReference type="PANTHER" id="PTHR38502">
    <property type="entry name" value="OVEREXPRESSED IN COLON CARCINOMA 1 PROTEIN"/>
    <property type="match status" value="1"/>
</dbReference>
<dbReference type="PANTHER" id="PTHR38502:SF1">
    <property type="entry name" value="OVEREXPRESSED IN COLON CARCINOMA 1 PROTEIN"/>
    <property type="match status" value="1"/>
</dbReference>
<dbReference type="Pfam" id="PF15506">
    <property type="entry name" value="OCC1"/>
    <property type="match status" value="1"/>
</dbReference>
<evidence type="ECO:0000256" key="1">
    <source>
        <dbReference type="SAM" id="MobiDB-lite"/>
    </source>
</evidence>
<evidence type="ECO:0000305" key="2"/>
<feature type="chain" id="PRO_0000391707" description="Overexpressed in colon carcinoma 1 protein homolog">
    <location>
        <begin position="1"/>
        <end position="63"/>
    </location>
</feature>
<feature type="region of interest" description="Disordered" evidence="1">
    <location>
        <begin position="1"/>
        <end position="37"/>
    </location>
</feature>
<feature type="compositionally biased region" description="Polar residues" evidence="1">
    <location>
        <begin position="1"/>
        <end position="10"/>
    </location>
</feature>
<feature type="sequence conflict" description="In Ref. 2; AI575172/BE112417." evidence="2" ref="2">
    <original>KP</original>
    <variation>PT</variation>
    <location>
        <begin position="17"/>
        <end position="18"/>
    </location>
</feature>
<feature type="sequence conflict" description="In Ref. 2; AI575172/BE112417." evidence="2" ref="2">
    <original>S</original>
    <variation>N</variation>
    <location>
        <position position="63"/>
    </location>
</feature>
<reference key="1">
    <citation type="journal article" date="2004" name="Nature">
        <title>Genome sequence of the Brown Norway rat yields insights into mammalian evolution.</title>
        <authorList>
            <person name="Gibbs R.A."/>
            <person name="Weinstock G.M."/>
            <person name="Metzker M.L."/>
            <person name="Muzny D.M."/>
            <person name="Sodergren E.J."/>
            <person name="Scherer S."/>
            <person name="Scott G."/>
            <person name="Steffen D."/>
            <person name="Worley K.C."/>
            <person name="Burch P.E."/>
            <person name="Okwuonu G."/>
            <person name="Hines S."/>
            <person name="Lewis L."/>
            <person name="Deramo C."/>
            <person name="Delgado O."/>
            <person name="Dugan-Rocha S."/>
            <person name="Miner G."/>
            <person name="Morgan M."/>
            <person name="Hawes A."/>
            <person name="Gill R."/>
            <person name="Holt R.A."/>
            <person name="Adams M.D."/>
            <person name="Amanatides P.G."/>
            <person name="Baden-Tillson H."/>
            <person name="Barnstead M."/>
            <person name="Chin S."/>
            <person name="Evans C.A."/>
            <person name="Ferriera S."/>
            <person name="Fosler C."/>
            <person name="Glodek A."/>
            <person name="Gu Z."/>
            <person name="Jennings D."/>
            <person name="Kraft C.L."/>
            <person name="Nguyen T."/>
            <person name="Pfannkoch C.M."/>
            <person name="Sitter C."/>
            <person name="Sutton G.G."/>
            <person name="Venter J.C."/>
            <person name="Woodage T."/>
            <person name="Smith D."/>
            <person name="Lee H.-M."/>
            <person name="Gustafson E."/>
            <person name="Cahill P."/>
            <person name="Kana A."/>
            <person name="Doucette-Stamm L."/>
            <person name="Weinstock K."/>
            <person name="Fechtel K."/>
            <person name="Weiss R.B."/>
            <person name="Dunn D.M."/>
            <person name="Green E.D."/>
            <person name="Blakesley R.W."/>
            <person name="Bouffard G.G."/>
            <person name="De Jong P.J."/>
            <person name="Osoegawa K."/>
            <person name="Zhu B."/>
            <person name="Marra M."/>
            <person name="Schein J."/>
            <person name="Bosdet I."/>
            <person name="Fjell C."/>
            <person name="Jones S."/>
            <person name="Krzywinski M."/>
            <person name="Mathewson C."/>
            <person name="Siddiqui A."/>
            <person name="Wye N."/>
            <person name="McPherson J."/>
            <person name="Zhao S."/>
            <person name="Fraser C.M."/>
            <person name="Shetty J."/>
            <person name="Shatsman S."/>
            <person name="Geer K."/>
            <person name="Chen Y."/>
            <person name="Abramzon S."/>
            <person name="Nierman W.C."/>
            <person name="Havlak P.H."/>
            <person name="Chen R."/>
            <person name="Durbin K.J."/>
            <person name="Egan A."/>
            <person name="Ren Y."/>
            <person name="Song X.-Z."/>
            <person name="Li B."/>
            <person name="Liu Y."/>
            <person name="Qin X."/>
            <person name="Cawley S."/>
            <person name="Cooney A.J."/>
            <person name="D'Souza L.M."/>
            <person name="Martin K."/>
            <person name="Wu J.Q."/>
            <person name="Gonzalez-Garay M.L."/>
            <person name="Jackson A.R."/>
            <person name="Kalafus K.J."/>
            <person name="McLeod M.P."/>
            <person name="Milosavljevic A."/>
            <person name="Virk D."/>
            <person name="Volkov A."/>
            <person name="Wheeler D.A."/>
            <person name="Zhang Z."/>
            <person name="Bailey J.A."/>
            <person name="Eichler E.E."/>
            <person name="Tuzun E."/>
            <person name="Birney E."/>
            <person name="Mongin E."/>
            <person name="Ureta-Vidal A."/>
            <person name="Woodwark C."/>
            <person name="Zdobnov E."/>
            <person name="Bork P."/>
            <person name="Suyama M."/>
            <person name="Torrents D."/>
            <person name="Alexandersson M."/>
            <person name="Trask B.J."/>
            <person name="Young J.M."/>
            <person name="Huang H."/>
            <person name="Wang H."/>
            <person name="Xing H."/>
            <person name="Daniels S."/>
            <person name="Gietzen D."/>
            <person name="Schmidt J."/>
            <person name="Stevens K."/>
            <person name="Vitt U."/>
            <person name="Wingrove J."/>
            <person name="Camara F."/>
            <person name="Mar Alba M."/>
            <person name="Abril J.F."/>
            <person name="Guigo R."/>
            <person name="Smit A."/>
            <person name="Dubchak I."/>
            <person name="Rubin E.M."/>
            <person name="Couronne O."/>
            <person name="Poliakov A."/>
            <person name="Huebner N."/>
            <person name="Ganten D."/>
            <person name="Goesele C."/>
            <person name="Hummel O."/>
            <person name="Kreitler T."/>
            <person name="Lee Y.-A."/>
            <person name="Monti J."/>
            <person name="Schulz H."/>
            <person name="Zimdahl H."/>
            <person name="Himmelbauer H."/>
            <person name="Lehrach H."/>
            <person name="Jacob H.J."/>
            <person name="Bromberg S."/>
            <person name="Gullings-Handley J."/>
            <person name="Jensen-Seaman M.I."/>
            <person name="Kwitek A.E."/>
            <person name="Lazar J."/>
            <person name="Pasko D."/>
            <person name="Tonellato P.J."/>
            <person name="Twigger S."/>
            <person name="Ponting C.P."/>
            <person name="Duarte J.M."/>
            <person name="Rice S."/>
            <person name="Goodstadt L."/>
            <person name="Beatson S.A."/>
            <person name="Emes R.D."/>
            <person name="Winter E.E."/>
            <person name="Webber C."/>
            <person name="Brandt P."/>
            <person name="Nyakatura G."/>
            <person name="Adetobi M."/>
            <person name="Chiaromonte F."/>
            <person name="Elnitski L."/>
            <person name="Eswara P."/>
            <person name="Hardison R.C."/>
            <person name="Hou M."/>
            <person name="Kolbe D."/>
            <person name="Makova K."/>
            <person name="Miller W."/>
            <person name="Nekrutenko A."/>
            <person name="Riemer C."/>
            <person name="Schwartz S."/>
            <person name="Taylor J."/>
            <person name="Yang S."/>
            <person name="Zhang Y."/>
            <person name="Lindpaintner K."/>
            <person name="Andrews T.D."/>
            <person name="Caccamo M."/>
            <person name="Clamp M."/>
            <person name="Clarke L."/>
            <person name="Curwen V."/>
            <person name="Durbin R.M."/>
            <person name="Eyras E."/>
            <person name="Searle S.M."/>
            <person name="Cooper G.M."/>
            <person name="Batzoglou S."/>
            <person name="Brudno M."/>
            <person name="Sidow A."/>
            <person name="Stone E.A."/>
            <person name="Payseur B.A."/>
            <person name="Bourque G."/>
            <person name="Lopez-Otin C."/>
            <person name="Puente X.S."/>
            <person name="Chakrabarti K."/>
            <person name="Chatterji S."/>
            <person name="Dewey C."/>
            <person name="Pachter L."/>
            <person name="Bray N."/>
            <person name="Yap V.B."/>
            <person name="Caspi A."/>
            <person name="Tesler G."/>
            <person name="Pevzner P.A."/>
            <person name="Haussler D."/>
            <person name="Roskin K.M."/>
            <person name="Baertsch R."/>
            <person name="Clawson H."/>
            <person name="Furey T.S."/>
            <person name="Hinrichs A.S."/>
            <person name="Karolchik D."/>
            <person name="Kent W.J."/>
            <person name="Rosenbloom K.R."/>
            <person name="Trumbower H."/>
            <person name="Weirauch M."/>
            <person name="Cooper D.N."/>
            <person name="Stenson P.D."/>
            <person name="Ma B."/>
            <person name="Brent M."/>
            <person name="Arumugam M."/>
            <person name="Shteynberg D."/>
            <person name="Copley R.R."/>
            <person name="Taylor M.S."/>
            <person name="Riethman H."/>
            <person name="Mudunuri U."/>
            <person name="Peterson J."/>
            <person name="Guyer M."/>
            <person name="Felsenfeld A."/>
            <person name="Old S."/>
            <person name="Mockrin S."/>
            <person name="Collins F.S."/>
        </authorList>
    </citation>
    <scope>NUCLEOTIDE SEQUENCE [LARGE SCALE GENOMIC DNA]</scope>
    <source>
        <strain>Brown Norway</strain>
    </source>
</reference>
<reference key="2">
    <citation type="submission" date="2000-06" db="EMBL/GenBank/DDBJ databases">
        <authorList>
            <person name="Soares M.B."/>
        </authorList>
    </citation>
    <scope>NUCLEOTIDE SEQUENCE [LARGE SCALE MRNA] OF 12-63</scope>
    <source>
        <strain>Sprague-Dawley</strain>
    </source>
</reference>
<accession>P0CD96</accession>
<keyword id="KW-1185">Reference proteome</keyword>
<sequence length="63" mass="6375">MGCGNSTATSAAAGRGKPGAVKDATEDSITEDDKRRNYGGVYVGLPSEAVNIASSQAKTVQKS</sequence>
<protein>
    <recommendedName>
        <fullName>Overexpressed in colon carcinoma 1 protein homolog</fullName>
        <shortName>OCC-1</shortName>
    </recommendedName>
</protein>
<proteinExistence type="inferred from homology"/>